<name>XLNR_ASPFC</name>
<gene>
    <name type="primary">xlnR</name>
    <name type="ORF">AFUB_031270</name>
</gene>
<reference key="1">
    <citation type="journal article" date="2008" name="PLoS Genet.">
        <title>Genomic islands in the pathogenic filamentous fungus Aspergillus fumigatus.</title>
        <authorList>
            <person name="Fedorova N.D."/>
            <person name="Khaldi N."/>
            <person name="Joardar V.S."/>
            <person name="Maiti R."/>
            <person name="Amedeo P."/>
            <person name="Anderson M.J."/>
            <person name="Crabtree J."/>
            <person name="Silva J.C."/>
            <person name="Badger J.H."/>
            <person name="Albarraq A."/>
            <person name="Angiuoli S."/>
            <person name="Bussey H."/>
            <person name="Bowyer P."/>
            <person name="Cotty P.J."/>
            <person name="Dyer P.S."/>
            <person name="Egan A."/>
            <person name="Galens K."/>
            <person name="Fraser-Liggett C.M."/>
            <person name="Haas B.J."/>
            <person name="Inman J.M."/>
            <person name="Kent R."/>
            <person name="Lemieux S."/>
            <person name="Malavazi I."/>
            <person name="Orvis J."/>
            <person name="Roemer T."/>
            <person name="Ronning C.M."/>
            <person name="Sundaram J.P."/>
            <person name="Sutton G."/>
            <person name="Turner G."/>
            <person name="Venter J.C."/>
            <person name="White O.R."/>
            <person name="Whitty B.R."/>
            <person name="Youngman P."/>
            <person name="Wolfe K.H."/>
            <person name="Goldman G.H."/>
            <person name="Wortman J.R."/>
            <person name="Jiang B."/>
            <person name="Denning D.W."/>
            <person name="Nierman W.C."/>
        </authorList>
    </citation>
    <scope>NUCLEOTIDE SEQUENCE [LARGE SCALE GENOMIC DNA]</scope>
    <source>
        <strain>CBS 144.89 / FGSC A1163 / CEA10</strain>
    </source>
</reference>
<protein>
    <recommendedName>
        <fullName>Xylanolytic transcriptional activator xlnR</fullName>
    </recommendedName>
    <alternativeName>
        <fullName>Xylanase regulator</fullName>
    </alternativeName>
</protein>
<comment type="function">
    <text evidence="1">Transcriptional activator of the xylanolytic system. Involved in the regulation of extracellular cellulolytic and xylanolytic genes and in the regulation of the intracellular activities of D-xylose catabolic genes in the pentose catabolic pathway (PCP) in response to the presence of D-xylose (By similarity).</text>
</comment>
<comment type="subcellular location">
    <subcellularLocation>
        <location evidence="2">Nucleus</location>
    </subcellularLocation>
</comment>
<comment type="similarity">
    <text evidence="4">Belongs to the xlnR/xlr1 family.</text>
</comment>
<organism>
    <name type="scientific">Aspergillus fumigatus (strain CBS 144.89 / FGSC A1163 / CEA10)</name>
    <name type="common">Neosartorya fumigata</name>
    <dbReference type="NCBI Taxonomy" id="451804"/>
    <lineage>
        <taxon>Eukaryota</taxon>
        <taxon>Fungi</taxon>
        <taxon>Dikarya</taxon>
        <taxon>Ascomycota</taxon>
        <taxon>Pezizomycotina</taxon>
        <taxon>Eurotiomycetes</taxon>
        <taxon>Eurotiomycetidae</taxon>
        <taxon>Eurotiales</taxon>
        <taxon>Aspergillaceae</taxon>
        <taxon>Aspergillus</taxon>
        <taxon>Aspergillus subgen. Fumigati</taxon>
    </lineage>
</organism>
<feature type="chain" id="PRO_0000393149" description="Xylanolytic transcriptional activator xlnR">
    <location>
        <begin position="1"/>
        <end position="954"/>
    </location>
</feature>
<feature type="DNA-binding region" description="Zn(2)-C6 fungal-type" evidence="2">
    <location>
        <begin position="119"/>
        <end position="145"/>
    </location>
</feature>
<feature type="region of interest" description="Disordered" evidence="3">
    <location>
        <begin position="1"/>
        <end position="39"/>
    </location>
</feature>
<feature type="region of interest" description="Disordered" evidence="3">
    <location>
        <begin position="51"/>
        <end position="93"/>
    </location>
</feature>
<feature type="region of interest" description="Disordered" evidence="3">
    <location>
        <begin position="173"/>
        <end position="226"/>
    </location>
</feature>
<feature type="region of interest" description="Disordered" evidence="3">
    <location>
        <begin position="312"/>
        <end position="332"/>
    </location>
</feature>
<feature type="region of interest" description="Disordered" evidence="3">
    <location>
        <begin position="566"/>
        <end position="607"/>
    </location>
</feature>
<feature type="region of interest" description="Disordered" evidence="3">
    <location>
        <begin position="758"/>
        <end position="777"/>
    </location>
</feature>
<feature type="compositionally biased region" description="Low complexity" evidence="3">
    <location>
        <begin position="8"/>
        <end position="21"/>
    </location>
</feature>
<feature type="compositionally biased region" description="Polar residues" evidence="3">
    <location>
        <begin position="22"/>
        <end position="33"/>
    </location>
</feature>
<feature type="compositionally biased region" description="Basic and acidic residues" evidence="3">
    <location>
        <begin position="64"/>
        <end position="78"/>
    </location>
</feature>
<feature type="compositionally biased region" description="Polar residues" evidence="3">
    <location>
        <begin position="82"/>
        <end position="91"/>
    </location>
</feature>
<feature type="compositionally biased region" description="Polar residues" evidence="3">
    <location>
        <begin position="174"/>
        <end position="183"/>
    </location>
</feature>
<feature type="compositionally biased region" description="Basic and acidic residues" evidence="3">
    <location>
        <begin position="574"/>
        <end position="590"/>
    </location>
</feature>
<feature type="compositionally biased region" description="Polar residues" evidence="3">
    <location>
        <begin position="764"/>
        <end position="777"/>
    </location>
</feature>
<evidence type="ECO:0000250" key="1"/>
<evidence type="ECO:0000255" key="2">
    <source>
        <dbReference type="PROSITE-ProRule" id="PRU00227"/>
    </source>
</evidence>
<evidence type="ECO:0000256" key="3">
    <source>
        <dbReference type="SAM" id="MobiDB-lite"/>
    </source>
</evidence>
<evidence type="ECO:0000305" key="4"/>
<dbReference type="EMBL" id="DS499595">
    <property type="protein sequence ID" value="EDP55066.1"/>
    <property type="molecule type" value="Genomic_DNA"/>
</dbReference>
<dbReference type="SMR" id="B0XUL1"/>
<dbReference type="EnsemblFungi" id="EDP55066">
    <property type="protein sequence ID" value="EDP55066"/>
    <property type="gene ID" value="AFUB_031270"/>
</dbReference>
<dbReference type="VEuPathDB" id="FungiDB:AFUB_031270"/>
<dbReference type="HOGENOM" id="CLU_006123_1_0_1"/>
<dbReference type="OrthoDB" id="73013at5052"/>
<dbReference type="PhylomeDB" id="B0XUL1"/>
<dbReference type="Proteomes" id="UP000001699">
    <property type="component" value="Unassembled WGS sequence"/>
</dbReference>
<dbReference type="GO" id="GO:0005634">
    <property type="term" value="C:nucleus"/>
    <property type="evidence" value="ECO:0007669"/>
    <property type="project" value="UniProtKB-SubCell"/>
</dbReference>
<dbReference type="GO" id="GO:0003677">
    <property type="term" value="F:DNA binding"/>
    <property type="evidence" value="ECO:0007669"/>
    <property type="project" value="UniProtKB-KW"/>
</dbReference>
<dbReference type="GO" id="GO:0000981">
    <property type="term" value="F:DNA-binding transcription factor activity, RNA polymerase II-specific"/>
    <property type="evidence" value="ECO:0007669"/>
    <property type="project" value="InterPro"/>
</dbReference>
<dbReference type="GO" id="GO:0008270">
    <property type="term" value="F:zinc ion binding"/>
    <property type="evidence" value="ECO:0007669"/>
    <property type="project" value="InterPro"/>
</dbReference>
<dbReference type="GO" id="GO:0006351">
    <property type="term" value="P:DNA-templated transcription"/>
    <property type="evidence" value="ECO:0007669"/>
    <property type="project" value="InterPro"/>
</dbReference>
<dbReference type="GO" id="GO:0045893">
    <property type="term" value="P:positive regulation of DNA-templated transcription"/>
    <property type="evidence" value="ECO:0000250"/>
    <property type="project" value="UniProtKB"/>
</dbReference>
<dbReference type="GO" id="GO:0045493">
    <property type="term" value="P:xylan catabolic process"/>
    <property type="evidence" value="ECO:0000250"/>
    <property type="project" value="UniProtKB"/>
</dbReference>
<dbReference type="CDD" id="cd12148">
    <property type="entry name" value="fungal_TF_MHR"/>
    <property type="match status" value="1"/>
</dbReference>
<dbReference type="CDD" id="cd00067">
    <property type="entry name" value="GAL4"/>
    <property type="match status" value="1"/>
</dbReference>
<dbReference type="FunFam" id="4.10.240.10:FF:000004">
    <property type="entry name" value="Xylanolytic transcriptional activator XlnR"/>
    <property type="match status" value="1"/>
</dbReference>
<dbReference type="Gene3D" id="4.10.240.10">
    <property type="entry name" value="Zn(2)-C6 fungal-type DNA-binding domain"/>
    <property type="match status" value="1"/>
</dbReference>
<dbReference type="InterPro" id="IPR007219">
    <property type="entry name" value="Transcription_factor_dom_fun"/>
</dbReference>
<dbReference type="InterPro" id="IPR051439">
    <property type="entry name" value="XlnR/Xlr1"/>
</dbReference>
<dbReference type="InterPro" id="IPR036864">
    <property type="entry name" value="Zn2-C6_fun-type_DNA-bd_sf"/>
</dbReference>
<dbReference type="InterPro" id="IPR001138">
    <property type="entry name" value="Zn2Cys6_DnaBD"/>
</dbReference>
<dbReference type="PANTHER" id="PTHR47663">
    <property type="entry name" value="XYLANOLYTIC TRANSCRIPTIONAL ACTIVATOR XLNR-RELATED"/>
    <property type="match status" value="1"/>
</dbReference>
<dbReference type="PANTHER" id="PTHR47663:SF1">
    <property type="entry name" value="XYLANOLYTIC TRANSCRIPTIONAL ACTIVATOR XLNR-RELATED"/>
    <property type="match status" value="1"/>
</dbReference>
<dbReference type="Pfam" id="PF04082">
    <property type="entry name" value="Fungal_trans"/>
    <property type="match status" value="1"/>
</dbReference>
<dbReference type="Pfam" id="PF00172">
    <property type="entry name" value="Zn_clus"/>
    <property type="match status" value="1"/>
</dbReference>
<dbReference type="SMART" id="SM00906">
    <property type="entry name" value="Fungal_trans"/>
    <property type="match status" value="1"/>
</dbReference>
<dbReference type="SMART" id="SM00066">
    <property type="entry name" value="GAL4"/>
    <property type="match status" value="1"/>
</dbReference>
<dbReference type="SUPFAM" id="SSF57701">
    <property type="entry name" value="Zn2/Cys6 DNA-binding domain"/>
    <property type="match status" value="1"/>
</dbReference>
<dbReference type="PROSITE" id="PS50048">
    <property type="entry name" value="ZN2_CY6_FUNGAL_2"/>
    <property type="match status" value="1"/>
</dbReference>
<accession>B0XUL1</accession>
<proteinExistence type="inferred from homology"/>
<keyword id="KW-0010">Activator</keyword>
<keyword id="KW-0238">DNA-binding</keyword>
<keyword id="KW-0479">Metal-binding</keyword>
<keyword id="KW-0539">Nucleus</keyword>
<keyword id="KW-0804">Transcription</keyword>
<keyword id="KW-0805">Transcription regulation</keyword>
<keyword id="KW-0862">Zinc</keyword>
<sequence length="954" mass="103941">MSTTSLQHFPHSYSPFSSSRSLNRMAQSQTSGLDTLAEGSQYALEQLQMSREAAGSGEATDSVGKPKDQFQVDNDNHHNNHSLSNFKNPSQRDPLVEARSTIRKNSASAPVRRRISRACDQCNQLRTKCDGQNPCAHCIEFGLTCEYARERKKRGKASKKDLAAAAAAAAAAATNSGQPNGSSGKEDAALVGGHTSPDRRPTINGRYDPAFEVPRNLNGSAQHSEASGMVGMQNSQHLPPHSQSSMGGGLEGLPLNGYNGLNDSGRPSMPVPELQSLHMLHNSHTNPRSPSSILTHHRYNGGYNDSAYSLMNPQEPNSTSISHFRLGSSTENPPNSFLGLSPPAQSPGWLPLPSPSPANFPSFSMASFSTTLRYPVLHPVLPHIASIIPQSLACDLLDVYFTSSSSSHLSPQSPYVVGYIFRKQSFLHPTKPRVCTPGLLASMLWVAAQTSDAPFLTSPPSARGRVCQKLLELTIGLLRPLIHGPAPGETSPNYAANMVINGVALGGFGVSMDQLGAQSSATGAVDDVATYVHLATVISASEYKAASMRWWTAAWSLARELKLGRELPPNTPHARPDAERDGDPDADLSKRHPPPLITSMGHGPGNTIINITEEEREERRRLWWLLYATDRHLALCYNRPLTLLDKECEGLLQPMNDDLWQAGDFATYRQAGPPVECTGHSMFGYFLPLMTILGEIVDLQQARNHPRFGLAFRNSAECEAQVLEIARQLDVYAQSLKEFETRYTSSLALGAAETEAAMDGSHPNHVSPSGRSSSTVESRVNESIVHTKMVVAYGTHIMHVLHILLAGKWDPINLLDDNDLWISSESFVAAMGHAVGAAEAAAEILEYDPDLSFMPFFFGIYLLQGSFLLLLTADKLQGDASPSVVRACETIVRAHEACVVTLNTEYQRTFRKVMRSALAQVRGRLPEDFGEQQQRRREVLALYRWTGDGSGLAL</sequence>